<name>PSIE_SALAR</name>
<reference key="1">
    <citation type="submission" date="2007-11" db="EMBL/GenBank/DDBJ databases">
        <authorList>
            <consortium name="The Salmonella enterica serovar Arizonae Genome Sequencing Project"/>
            <person name="McClelland M."/>
            <person name="Sanderson E.K."/>
            <person name="Porwollik S."/>
            <person name="Spieth J."/>
            <person name="Clifton W.S."/>
            <person name="Fulton R."/>
            <person name="Chunyan W."/>
            <person name="Wollam A."/>
            <person name="Shah N."/>
            <person name="Pepin K."/>
            <person name="Bhonagiri V."/>
            <person name="Nash W."/>
            <person name="Johnson M."/>
            <person name="Thiruvilangam P."/>
            <person name="Wilson R."/>
        </authorList>
    </citation>
    <scope>NUCLEOTIDE SEQUENCE [LARGE SCALE GENOMIC DNA]</scope>
    <source>
        <strain>ATCC BAA-731 / CDC346-86 / RSK2980</strain>
    </source>
</reference>
<dbReference type="EMBL" id="CP000880">
    <property type="protein sequence ID" value="ABX23285.1"/>
    <property type="molecule type" value="Genomic_DNA"/>
</dbReference>
<dbReference type="SMR" id="A9MHA2"/>
<dbReference type="STRING" id="41514.SARI_03456"/>
<dbReference type="KEGG" id="ses:SARI_03456"/>
<dbReference type="HOGENOM" id="CLU_127561_0_1_6"/>
<dbReference type="Proteomes" id="UP000002084">
    <property type="component" value="Chromosome"/>
</dbReference>
<dbReference type="GO" id="GO:0005886">
    <property type="term" value="C:plasma membrane"/>
    <property type="evidence" value="ECO:0007669"/>
    <property type="project" value="UniProtKB-SubCell"/>
</dbReference>
<dbReference type="GO" id="GO:0016036">
    <property type="term" value="P:cellular response to phosphate starvation"/>
    <property type="evidence" value="ECO:0007669"/>
    <property type="project" value="InterPro"/>
</dbReference>
<dbReference type="HAMAP" id="MF_01048">
    <property type="entry name" value="PsiE"/>
    <property type="match status" value="1"/>
</dbReference>
<dbReference type="InterPro" id="IPR009315">
    <property type="entry name" value="P_starv_induced_PsiE"/>
</dbReference>
<dbReference type="InterPro" id="IPR020948">
    <property type="entry name" value="P_starv_induced_PsiE-like"/>
</dbReference>
<dbReference type="NCBIfam" id="NF002765">
    <property type="entry name" value="PRK02833.1-3"/>
    <property type="match status" value="1"/>
</dbReference>
<dbReference type="NCBIfam" id="NF002767">
    <property type="entry name" value="PRK02833.1-5"/>
    <property type="match status" value="1"/>
</dbReference>
<dbReference type="PANTHER" id="PTHR37819">
    <property type="entry name" value="PROTEIN PSIE"/>
    <property type="match status" value="1"/>
</dbReference>
<dbReference type="PANTHER" id="PTHR37819:SF1">
    <property type="entry name" value="PROTEIN PSIE"/>
    <property type="match status" value="1"/>
</dbReference>
<dbReference type="Pfam" id="PF06146">
    <property type="entry name" value="PsiE"/>
    <property type="match status" value="1"/>
</dbReference>
<dbReference type="PIRSF" id="PIRSF029598">
    <property type="entry name" value="PsiE"/>
    <property type="match status" value="1"/>
</dbReference>
<gene>
    <name evidence="1" type="primary">psiE</name>
    <name type="ordered locus">SARI_03456</name>
</gene>
<protein>
    <recommendedName>
        <fullName evidence="1">Protein PsiE</fullName>
    </recommendedName>
</protein>
<evidence type="ECO:0000255" key="1">
    <source>
        <dbReference type="HAMAP-Rule" id="MF_01048"/>
    </source>
</evidence>
<feature type="chain" id="PRO_1000084419" description="Protein PsiE">
    <location>
        <begin position="1"/>
        <end position="136"/>
    </location>
</feature>
<feature type="transmembrane region" description="Helical" evidence="1">
    <location>
        <begin position="15"/>
        <end position="35"/>
    </location>
</feature>
<feature type="transmembrane region" description="Helical" evidence="1">
    <location>
        <begin position="55"/>
        <end position="75"/>
    </location>
</feature>
<feature type="transmembrane region" description="Helical" evidence="1">
    <location>
        <begin position="82"/>
        <end position="102"/>
    </location>
</feature>
<feature type="transmembrane region" description="Helical" evidence="1">
    <location>
        <begin position="108"/>
        <end position="128"/>
    </location>
</feature>
<organism>
    <name type="scientific">Salmonella arizonae (strain ATCC BAA-731 / CDC346-86 / RSK2980)</name>
    <dbReference type="NCBI Taxonomy" id="41514"/>
    <lineage>
        <taxon>Bacteria</taxon>
        <taxon>Pseudomonadati</taxon>
        <taxon>Pseudomonadota</taxon>
        <taxon>Gammaproteobacteria</taxon>
        <taxon>Enterobacterales</taxon>
        <taxon>Enterobacteriaceae</taxon>
        <taxon>Salmonella</taxon>
    </lineage>
</organism>
<keyword id="KW-0997">Cell inner membrane</keyword>
<keyword id="KW-1003">Cell membrane</keyword>
<keyword id="KW-0472">Membrane</keyword>
<keyword id="KW-1185">Reference proteome</keyword>
<keyword id="KW-0812">Transmembrane</keyword>
<keyword id="KW-1133">Transmembrane helix</keyword>
<proteinExistence type="inferred from homology"/>
<comment type="subcellular location">
    <subcellularLocation>
        <location evidence="1">Cell inner membrane</location>
        <topology evidence="1">Multi-pass membrane protein</topology>
    </subcellularLocation>
</comment>
<comment type="similarity">
    <text evidence="1">Belongs to the PsiE family.</text>
</comment>
<sequence>MMSLSRSHLELIATILQNVLNLGLLTLGLILVLFLGKETVHLADALFVPEQASKYELVEGLVIYFLYFEFIALIVKYFKSGFHFPLRYFVYIGITAIVRLIIVDHKTPMDVLLYSAAILLLVITLWLCNSNRLRRE</sequence>
<accession>A9MHA2</accession>